<reference key="1">
    <citation type="journal article" date="2006" name="Proc. Natl. Acad. Sci. U.S.A.">
        <title>The complete genome sequence of Lactobacillus bulgaricus reveals extensive and ongoing reductive evolution.</title>
        <authorList>
            <person name="van de Guchte M."/>
            <person name="Penaud S."/>
            <person name="Grimaldi C."/>
            <person name="Barbe V."/>
            <person name="Bryson K."/>
            <person name="Nicolas P."/>
            <person name="Robert C."/>
            <person name="Oztas S."/>
            <person name="Mangenot S."/>
            <person name="Couloux A."/>
            <person name="Loux V."/>
            <person name="Dervyn R."/>
            <person name="Bossy R."/>
            <person name="Bolotin A."/>
            <person name="Batto J.-M."/>
            <person name="Walunas T."/>
            <person name="Gibrat J.-F."/>
            <person name="Bessieres P."/>
            <person name="Weissenbach J."/>
            <person name="Ehrlich S.D."/>
            <person name="Maguin E."/>
        </authorList>
    </citation>
    <scope>NUCLEOTIDE SEQUENCE [LARGE SCALE GENOMIC DNA]</scope>
    <source>
        <strain>ATCC 11842 / DSM 20081 / BCRC 10696 / JCM 1002 / NBRC 13953 / NCIMB 11778 / NCTC 12712 / WDCM 00102 / Lb 14</strain>
    </source>
</reference>
<gene>
    <name type="ordered locus">Ldb2075</name>
</gene>
<keyword id="KW-1185">Reference proteome</keyword>
<evidence type="ECO:0000255" key="1">
    <source>
        <dbReference type="HAMAP-Rule" id="MF_00652"/>
    </source>
</evidence>
<feature type="chain" id="PRO_0000262027" description="UPF0246 protein Ldb2075">
    <location>
        <begin position="1"/>
        <end position="245"/>
    </location>
</feature>
<comment type="similarity">
    <text evidence="1">Belongs to the UPF0246 family.</text>
</comment>
<organism>
    <name type="scientific">Lactobacillus delbrueckii subsp. bulgaricus (strain ATCC 11842 / DSM 20081 / BCRC 10696 / JCM 1002 / NBRC 13953 / NCIMB 11778 / NCTC 12712 / WDCM 00102 / Lb 14)</name>
    <dbReference type="NCBI Taxonomy" id="390333"/>
    <lineage>
        <taxon>Bacteria</taxon>
        <taxon>Bacillati</taxon>
        <taxon>Bacillota</taxon>
        <taxon>Bacilli</taxon>
        <taxon>Lactobacillales</taxon>
        <taxon>Lactobacillaceae</taxon>
        <taxon>Lactobacillus</taxon>
    </lineage>
</organism>
<dbReference type="EMBL" id="CR954253">
    <property type="protein sequence ID" value="CAI98813.1"/>
    <property type="molecule type" value="Genomic_DNA"/>
</dbReference>
<dbReference type="RefSeq" id="WP_011544313.1">
    <property type="nucleotide sequence ID" value="NC_008054.1"/>
</dbReference>
<dbReference type="SMR" id="Q1G889"/>
<dbReference type="STRING" id="390333.Ldb2075"/>
<dbReference type="KEGG" id="ldb:Ldb2075"/>
<dbReference type="PATRIC" id="fig|390333.13.peg.1502"/>
<dbReference type="eggNOG" id="COG3022">
    <property type="taxonomic scope" value="Bacteria"/>
</dbReference>
<dbReference type="HOGENOM" id="CLU_061989_1_0_9"/>
<dbReference type="BioCyc" id="LDEL390333:LDB_RS09050-MONOMER"/>
<dbReference type="Proteomes" id="UP000001259">
    <property type="component" value="Chromosome"/>
</dbReference>
<dbReference type="GO" id="GO:0005829">
    <property type="term" value="C:cytosol"/>
    <property type="evidence" value="ECO:0007669"/>
    <property type="project" value="TreeGrafter"/>
</dbReference>
<dbReference type="GO" id="GO:0033194">
    <property type="term" value="P:response to hydroperoxide"/>
    <property type="evidence" value="ECO:0007669"/>
    <property type="project" value="TreeGrafter"/>
</dbReference>
<dbReference type="HAMAP" id="MF_00652">
    <property type="entry name" value="UPF0246"/>
    <property type="match status" value="1"/>
</dbReference>
<dbReference type="InterPro" id="IPR005583">
    <property type="entry name" value="YaaA"/>
</dbReference>
<dbReference type="NCBIfam" id="NF002543">
    <property type="entry name" value="PRK02101.1-4"/>
    <property type="match status" value="1"/>
</dbReference>
<dbReference type="PANTHER" id="PTHR30283:SF4">
    <property type="entry name" value="PEROXIDE STRESS RESISTANCE PROTEIN YAAA"/>
    <property type="match status" value="1"/>
</dbReference>
<dbReference type="PANTHER" id="PTHR30283">
    <property type="entry name" value="PEROXIDE STRESS RESPONSE PROTEIN YAAA"/>
    <property type="match status" value="1"/>
</dbReference>
<dbReference type="Pfam" id="PF03883">
    <property type="entry name" value="H2O2_YaaD"/>
    <property type="match status" value="1"/>
</dbReference>
<sequence length="245" mass="27965">MKIVISPAKKMQTDGGFLPKSQPVFLDQAEELWSYLHSLDQAGLEKVWRANAKITEEARQMLAADLTQPQVPALFAYSGLQYQYLAADVLDQAGLDYLDQHLRVLSGLYGSLRPFDGIVPYRLEMKSPLPAFKYKSLYEFWGEKVYQELYQDDSVVLNLASKEYSHLLTPFLKEGDRLLEVVFQEEKNGKWRTQATHAKMARGRLVRWLAEGGRDLSDLPGFTDFGYAFAPDQSGEDRVVFRKKA</sequence>
<accession>Q1G889</accession>
<proteinExistence type="inferred from homology"/>
<name>Y2075_LACDA</name>
<protein>
    <recommendedName>
        <fullName evidence="1">UPF0246 protein Ldb2075</fullName>
    </recommendedName>
</protein>